<reference key="1">
    <citation type="journal article" date="2009" name="PLoS ONE">
        <title>Genome degradation in Brucella ovis corresponds with narrowing of its host range and tissue tropism.</title>
        <authorList>
            <person name="Tsolis R.M."/>
            <person name="Seshadri R."/>
            <person name="Santos R.L."/>
            <person name="Sangari F.J."/>
            <person name="Lobo J.M."/>
            <person name="de Jong M.F."/>
            <person name="Ren Q."/>
            <person name="Myers G."/>
            <person name="Brinkac L.M."/>
            <person name="Nelson W.C."/>
            <person name="Deboy R.T."/>
            <person name="Angiuoli S."/>
            <person name="Khouri H."/>
            <person name="Dimitrov G."/>
            <person name="Robinson J.R."/>
            <person name="Mulligan S."/>
            <person name="Walker R.L."/>
            <person name="Elzer P.E."/>
            <person name="Hassan K.A."/>
            <person name="Paulsen I.T."/>
        </authorList>
    </citation>
    <scope>NUCLEOTIDE SEQUENCE [LARGE SCALE GENOMIC DNA]</scope>
    <source>
        <strain>ATCC 25840 / 63/290 / NCTC 10512</strain>
    </source>
</reference>
<organism>
    <name type="scientific">Brucella ovis (strain ATCC 25840 / 63/290 / NCTC 10512)</name>
    <dbReference type="NCBI Taxonomy" id="444178"/>
    <lineage>
        <taxon>Bacteria</taxon>
        <taxon>Pseudomonadati</taxon>
        <taxon>Pseudomonadota</taxon>
        <taxon>Alphaproteobacteria</taxon>
        <taxon>Hyphomicrobiales</taxon>
        <taxon>Brucellaceae</taxon>
        <taxon>Brucella/Ochrobactrum group</taxon>
        <taxon>Brucella</taxon>
    </lineage>
</organism>
<protein>
    <recommendedName>
        <fullName evidence="1">ATP synthase gamma chain</fullName>
    </recommendedName>
    <alternativeName>
        <fullName evidence="1">ATP synthase F1 sector gamma subunit</fullName>
    </alternativeName>
    <alternativeName>
        <fullName evidence="1">F-ATPase gamma subunit</fullName>
    </alternativeName>
</protein>
<keyword id="KW-0066">ATP synthesis</keyword>
<keyword id="KW-0997">Cell inner membrane</keyword>
<keyword id="KW-1003">Cell membrane</keyword>
<keyword id="KW-0139">CF(1)</keyword>
<keyword id="KW-0375">Hydrogen ion transport</keyword>
<keyword id="KW-0406">Ion transport</keyword>
<keyword id="KW-0472">Membrane</keyword>
<keyword id="KW-0813">Transport</keyword>
<name>ATPG_BRUO2</name>
<proteinExistence type="inferred from homology"/>
<evidence type="ECO:0000255" key="1">
    <source>
        <dbReference type="HAMAP-Rule" id="MF_00815"/>
    </source>
</evidence>
<sequence length="292" mass="31813">MPSLKDLRNRIASVKATQKITKAMQMVAAAKLRRAQEAAEAARPYSQRMGAVLANIAQNVSGEDAPALMVGTGKDDVHLLVVCTAERGLCGGFNSQIARLARDHARKLLAEGKTVKIITVGKKGADILRREFSALLHDHVDLREVKQLAFVHADQIGHKIIKLFEEGAFDVCTLFYSEFKSVISQVPTAQQLIPASADNEAEMETAGDAIYEYEPDPAAILSTLIPRNISVQIFRALLENVAGEMGAKMSAMDNATRNAGDMINKLSITYNRQRQAQITKELIEIISGAEAL</sequence>
<comment type="function">
    <text evidence="1">Produces ATP from ADP in the presence of a proton gradient across the membrane. The gamma chain is believed to be important in regulating ATPase activity and the flow of protons through the CF(0) complex.</text>
</comment>
<comment type="subunit">
    <text evidence="1">F-type ATPases have 2 components, CF(1) - the catalytic core - and CF(0) - the membrane proton channel. CF(1) has five subunits: alpha(3), beta(3), gamma(1), delta(1), epsilon(1). CF(0) has three main subunits: a, b and c.</text>
</comment>
<comment type="subcellular location">
    <subcellularLocation>
        <location evidence="1">Cell inner membrane</location>
        <topology evidence="1">Peripheral membrane protein</topology>
    </subcellularLocation>
</comment>
<comment type="similarity">
    <text evidence="1">Belongs to the ATPase gamma chain family.</text>
</comment>
<accession>A5VSE2</accession>
<feature type="chain" id="PRO_1000053167" description="ATP synthase gamma chain">
    <location>
        <begin position="1"/>
        <end position="292"/>
    </location>
</feature>
<dbReference type="EMBL" id="CP000708">
    <property type="protein sequence ID" value="ABQ60723.1"/>
    <property type="molecule type" value="Genomic_DNA"/>
</dbReference>
<dbReference type="RefSeq" id="WP_004689233.1">
    <property type="nucleotide sequence ID" value="NC_009505.1"/>
</dbReference>
<dbReference type="SMR" id="A5VSE2"/>
<dbReference type="KEGG" id="bov:BOV_1733"/>
<dbReference type="HOGENOM" id="CLU_050669_0_1_5"/>
<dbReference type="PhylomeDB" id="A5VSE2"/>
<dbReference type="Proteomes" id="UP000006383">
    <property type="component" value="Chromosome I"/>
</dbReference>
<dbReference type="GO" id="GO:0005886">
    <property type="term" value="C:plasma membrane"/>
    <property type="evidence" value="ECO:0007669"/>
    <property type="project" value="UniProtKB-SubCell"/>
</dbReference>
<dbReference type="GO" id="GO:0045259">
    <property type="term" value="C:proton-transporting ATP synthase complex"/>
    <property type="evidence" value="ECO:0007669"/>
    <property type="project" value="UniProtKB-KW"/>
</dbReference>
<dbReference type="GO" id="GO:0005524">
    <property type="term" value="F:ATP binding"/>
    <property type="evidence" value="ECO:0007669"/>
    <property type="project" value="UniProtKB-UniRule"/>
</dbReference>
<dbReference type="GO" id="GO:0046933">
    <property type="term" value="F:proton-transporting ATP synthase activity, rotational mechanism"/>
    <property type="evidence" value="ECO:0007669"/>
    <property type="project" value="UniProtKB-UniRule"/>
</dbReference>
<dbReference type="GO" id="GO:0042777">
    <property type="term" value="P:proton motive force-driven plasma membrane ATP synthesis"/>
    <property type="evidence" value="ECO:0007669"/>
    <property type="project" value="UniProtKB-UniRule"/>
</dbReference>
<dbReference type="CDD" id="cd12151">
    <property type="entry name" value="F1-ATPase_gamma"/>
    <property type="match status" value="1"/>
</dbReference>
<dbReference type="FunFam" id="1.10.287.80:FF:000001">
    <property type="entry name" value="ATP synthase gamma chain"/>
    <property type="match status" value="1"/>
</dbReference>
<dbReference type="FunFam" id="1.10.287.80:FF:000003">
    <property type="entry name" value="ATP synthase gamma chain, chloroplastic"/>
    <property type="match status" value="1"/>
</dbReference>
<dbReference type="Gene3D" id="3.40.1380.10">
    <property type="match status" value="1"/>
</dbReference>
<dbReference type="Gene3D" id="1.10.287.80">
    <property type="entry name" value="ATP synthase, gamma subunit, helix hairpin domain"/>
    <property type="match status" value="1"/>
</dbReference>
<dbReference type="HAMAP" id="MF_00815">
    <property type="entry name" value="ATP_synth_gamma_bact"/>
    <property type="match status" value="1"/>
</dbReference>
<dbReference type="InterPro" id="IPR035968">
    <property type="entry name" value="ATP_synth_F1_ATPase_gsu"/>
</dbReference>
<dbReference type="InterPro" id="IPR000131">
    <property type="entry name" value="ATP_synth_F1_gsu"/>
</dbReference>
<dbReference type="InterPro" id="IPR023632">
    <property type="entry name" value="ATP_synth_F1_gsu_CS"/>
</dbReference>
<dbReference type="NCBIfam" id="TIGR01146">
    <property type="entry name" value="ATPsyn_F1gamma"/>
    <property type="match status" value="1"/>
</dbReference>
<dbReference type="NCBIfam" id="NF004146">
    <property type="entry name" value="PRK05621.1-4"/>
    <property type="match status" value="1"/>
</dbReference>
<dbReference type="PANTHER" id="PTHR11693">
    <property type="entry name" value="ATP SYNTHASE GAMMA CHAIN"/>
    <property type="match status" value="1"/>
</dbReference>
<dbReference type="PANTHER" id="PTHR11693:SF22">
    <property type="entry name" value="ATP SYNTHASE SUBUNIT GAMMA, MITOCHONDRIAL"/>
    <property type="match status" value="1"/>
</dbReference>
<dbReference type="Pfam" id="PF00231">
    <property type="entry name" value="ATP-synt"/>
    <property type="match status" value="1"/>
</dbReference>
<dbReference type="PIRSF" id="PIRSF039089">
    <property type="entry name" value="ATP_synthase_gamma"/>
    <property type="match status" value="1"/>
</dbReference>
<dbReference type="PRINTS" id="PR00126">
    <property type="entry name" value="ATPASEGAMMA"/>
</dbReference>
<dbReference type="SUPFAM" id="SSF52943">
    <property type="entry name" value="ATP synthase (F1-ATPase), gamma subunit"/>
    <property type="match status" value="1"/>
</dbReference>
<dbReference type="PROSITE" id="PS00153">
    <property type="entry name" value="ATPASE_GAMMA"/>
    <property type="match status" value="1"/>
</dbReference>
<gene>
    <name evidence="1" type="primary">atpG</name>
    <name type="ordered locus">BOV_1733</name>
</gene>